<comment type="function">
    <text evidence="1">Catalyzes the desulfonation of aliphatic sulfonates.</text>
</comment>
<comment type="catalytic activity">
    <reaction evidence="1">
        <text>an alkanesulfonate + FMNH2 + O2 = an aldehyde + FMN + sulfite + H2O + 2 H(+)</text>
        <dbReference type="Rhea" id="RHEA:23064"/>
        <dbReference type="ChEBI" id="CHEBI:15377"/>
        <dbReference type="ChEBI" id="CHEBI:15378"/>
        <dbReference type="ChEBI" id="CHEBI:15379"/>
        <dbReference type="ChEBI" id="CHEBI:17359"/>
        <dbReference type="ChEBI" id="CHEBI:17478"/>
        <dbReference type="ChEBI" id="CHEBI:57618"/>
        <dbReference type="ChEBI" id="CHEBI:58210"/>
        <dbReference type="ChEBI" id="CHEBI:134249"/>
        <dbReference type="EC" id="1.14.14.5"/>
    </reaction>
</comment>
<comment type="subunit">
    <text evidence="1">Homotetramer.</text>
</comment>
<comment type="miscellaneous">
    <text evidence="1">FMNH(2) which is absolutely required for this enzymatic reaction, is provided by SsuE.</text>
</comment>
<comment type="similarity">
    <text evidence="1">Belongs to the SsuD family.</text>
</comment>
<organism>
    <name type="scientific">Cronobacter sakazakii (strain ATCC BAA-894)</name>
    <name type="common">Enterobacter sakazakii</name>
    <dbReference type="NCBI Taxonomy" id="290339"/>
    <lineage>
        <taxon>Bacteria</taxon>
        <taxon>Pseudomonadati</taxon>
        <taxon>Pseudomonadota</taxon>
        <taxon>Gammaproteobacteria</taxon>
        <taxon>Enterobacterales</taxon>
        <taxon>Enterobacteriaceae</taxon>
        <taxon>Cronobacter</taxon>
    </lineage>
</organism>
<accession>A7MEW3</accession>
<dbReference type="EC" id="1.14.14.5" evidence="1"/>
<dbReference type="EMBL" id="CP000783">
    <property type="protein sequence ID" value="ABU77651.1"/>
    <property type="molecule type" value="Genomic_DNA"/>
</dbReference>
<dbReference type="RefSeq" id="WP_012125195.1">
    <property type="nucleotide sequence ID" value="NC_009778.1"/>
</dbReference>
<dbReference type="SMR" id="A7MEW3"/>
<dbReference type="KEGG" id="esa:ESA_02405"/>
<dbReference type="PATRIC" id="fig|290339.8.peg.2137"/>
<dbReference type="HOGENOM" id="CLU_027853_1_0_6"/>
<dbReference type="Proteomes" id="UP000000260">
    <property type="component" value="Chromosome"/>
</dbReference>
<dbReference type="GO" id="GO:0008726">
    <property type="term" value="F:alkanesulfonate monooxygenase activity"/>
    <property type="evidence" value="ECO:0007669"/>
    <property type="project" value="UniProtKB-UniRule"/>
</dbReference>
<dbReference type="GO" id="GO:0046306">
    <property type="term" value="P:alkanesulfonate catabolic process"/>
    <property type="evidence" value="ECO:0007669"/>
    <property type="project" value="TreeGrafter"/>
</dbReference>
<dbReference type="CDD" id="cd01094">
    <property type="entry name" value="Alkanesulfonate_monoxygenase"/>
    <property type="match status" value="1"/>
</dbReference>
<dbReference type="FunFam" id="3.20.20.30:FF:000001">
    <property type="entry name" value="Alkanesulfonate monooxygenase"/>
    <property type="match status" value="1"/>
</dbReference>
<dbReference type="Gene3D" id="3.20.20.30">
    <property type="entry name" value="Luciferase-like domain"/>
    <property type="match status" value="1"/>
</dbReference>
<dbReference type="HAMAP" id="MF_01229">
    <property type="entry name" value="Alkanesulf_monooxygen"/>
    <property type="match status" value="1"/>
</dbReference>
<dbReference type="InterPro" id="IPR019911">
    <property type="entry name" value="Alkanesulphonate_mOase_FMN-dep"/>
</dbReference>
<dbReference type="InterPro" id="IPR011251">
    <property type="entry name" value="Luciferase-like_dom"/>
</dbReference>
<dbReference type="InterPro" id="IPR036661">
    <property type="entry name" value="Luciferase-like_sf"/>
</dbReference>
<dbReference type="InterPro" id="IPR050172">
    <property type="entry name" value="SsuD_RutA_monooxygenase"/>
</dbReference>
<dbReference type="NCBIfam" id="TIGR03565">
    <property type="entry name" value="alk_sulf_monoox"/>
    <property type="match status" value="1"/>
</dbReference>
<dbReference type="NCBIfam" id="NF001939">
    <property type="entry name" value="PRK00719.1"/>
    <property type="match status" value="1"/>
</dbReference>
<dbReference type="PANTHER" id="PTHR42847">
    <property type="entry name" value="ALKANESULFONATE MONOOXYGENASE"/>
    <property type="match status" value="1"/>
</dbReference>
<dbReference type="PANTHER" id="PTHR42847:SF4">
    <property type="entry name" value="ALKANESULFONATE MONOOXYGENASE-RELATED"/>
    <property type="match status" value="1"/>
</dbReference>
<dbReference type="Pfam" id="PF00296">
    <property type="entry name" value="Bac_luciferase"/>
    <property type="match status" value="1"/>
</dbReference>
<dbReference type="SUPFAM" id="SSF51679">
    <property type="entry name" value="Bacterial luciferase-like"/>
    <property type="match status" value="1"/>
</dbReference>
<keyword id="KW-0285">Flavoprotein</keyword>
<keyword id="KW-0288">FMN</keyword>
<keyword id="KW-0503">Monooxygenase</keyword>
<keyword id="KW-0560">Oxidoreductase</keyword>
<keyword id="KW-1185">Reference proteome</keyword>
<name>SSUD_CROS8</name>
<feature type="chain" id="PRO_1000066825" description="Alkanesulfonate monooxygenase">
    <location>
        <begin position="1"/>
        <end position="381"/>
    </location>
</feature>
<reference key="1">
    <citation type="journal article" date="2010" name="PLoS ONE">
        <title>Genome sequence of Cronobacter sakazakii BAA-894 and comparative genomic hybridization analysis with other Cronobacter species.</title>
        <authorList>
            <person name="Kucerova E."/>
            <person name="Clifton S.W."/>
            <person name="Xia X.Q."/>
            <person name="Long F."/>
            <person name="Porwollik S."/>
            <person name="Fulton L."/>
            <person name="Fronick C."/>
            <person name="Minx P."/>
            <person name="Kyung K."/>
            <person name="Warren W."/>
            <person name="Fulton R."/>
            <person name="Feng D."/>
            <person name="Wollam A."/>
            <person name="Shah N."/>
            <person name="Bhonagiri V."/>
            <person name="Nash W.E."/>
            <person name="Hallsworth-Pepin K."/>
            <person name="Wilson R.K."/>
            <person name="McClelland M."/>
            <person name="Forsythe S.J."/>
        </authorList>
    </citation>
    <scope>NUCLEOTIDE SEQUENCE [LARGE SCALE GENOMIC DNA]</scope>
    <source>
        <strain>ATCC BAA-894</strain>
    </source>
</reference>
<sequence length="381" mass="41482">MSLNLFWFLPTHGDGHYLGSDAGARPVDHGYLQQIAQAADRLGFTGVLIPTGRSCEDAWLVAASMIPVTQRLKFLVALRPSVVSPTVAARQAATLDRLSNGRALFNLVTGSDPQELAGDGVFLDHTARYEASAEFTRVWRRLLEGEKVDFEGKHIKVRGAQLLFPPVQQPRPPLYFGGSSDVAQDLAAEQVDLYLTWGEPPEQVKEKIAQVRAKAAAHGRTVRFGIRLHVIVRETTEEAWQAADRLIAHLDDETIAKAQAAFARQDSVGQQRMAALHGGRRDQLEISPNLWAGVGLVRGGAGTALVGDGPTVAARINEYAALGIDSFILSGYPHLEEAYRVGEFLFPHLDVAIPDVPQPRPLTAQGEAVANEFIPRRVAQS</sequence>
<evidence type="ECO:0000255" key="1">
    <source>
        <dbReference type="HAMAP-Rule" id="MF_01229"/>
    </source>
</evidence>
<gene>
    <name evidence="1" type="primary">ssuD</name>
    <name type="ordered locus">ESA_02405</name>
</gene>
<proteinExistence type="inferred from homology"/>
<protein>
    <recommendedName>
        <fullName evidence="1">Alkanesulfonate monooxygenase</fullName>
        <ecNumber evidence="1">1.14.14.5</ecNumber>
    </recommendedName>
    <alternativeName>
        <fullName evidence="1">FMNH2-dependent aliphatic sulfonate monooxygenase</fullName>
    </alternativeName>
</protein>